<name>GLPK_HALHL</name>
<protein>
    <recommendedName>
        <fullName evidence="1">Glycerol kinase</fullName>
        <ecNumber evidence="1">2.7.1.30</ecNumber>
    </recommendedName>
    <alternativeName>
        <fullName evidence="1">ATP:glycerol 3-phosphotransferase</fullName>
    </alternativeName>
    <alternativeName>
        <fullName evidence="1">Glycerokinase</fullName>
        <shortName evidence="1">GK</shortName>
    </alternativeName>
</protein>
<evidence type="ECO:0000255" key="1">
    <source>
        <dbReference type="HAMAP-Rule" id="MF_00186"/>
    </source>
</evidence>
<dbReference type="EC" id="2.7.1.30" evidence="1"/>
<dbReference type="EMBL" id="CP000544">
    <property type="protein sequence ID" value="ABM60873.1"/>
    <property type="molecule type" value="Genomic_DNA"/>
</dbReference>
<dbReference type="RefSeq" id="WP_011812896.1">
    <property type="nucleotide sequence ID" value="NC_008789.1"/>
</dbReference>
<dbReference type="SMR" id="A1WT61"/>
<dbReference type="STRING" id="349124.Hhal_0078"/>
<dbReference type="KEGG" id="hha:Hhal_0078"/>
<dbReference type="eggNOG" id="COG0554">
    <property type="taxonomic scope" value="Bacteria"/>
</dbReference>
<dbReference type="HOGENOM" id="CLU_009281_2_3_6"/>
<dbReference type="OrthoDB" id="9805576at2"/>
<dbReference type="UniPathway" id="UPA00618">
    <property type="reaction ID" value="UER00672"/>
</dbReference>
<dbReference type="Proteomes" id="UP000000647">
    <property type="component" value="Chromosome"/>
</dbReference>
<dbReference type="GO" id="GO:0005829">
    <property type="term" value="C:cytosol"/>
    <property type="evidence" value="ECO:0007669"/>
    <property type="project" value="TreeGrafter"/>
</dbReference>
<dbReference type="GO" id="GO:0005524">
    <property type="term" value="F:ATP binding"/>
    <property type="evidence" value="ECO:0007669"/>
    <property type="project" value="UniProtKB-UniRule"/>
</dbReference>
<dbReference type="GO" id="GO:0004370">
    <property type="term" value="F:glycerol kinase activity"/>
    <property type="evidence" value="ECO:0000250"/>
    <property type="project" value="UniProtKB"/>
</dbReference>
<dbReference type="GO" id="GO:0019563">
    <property type="term" value="P:glycerol catabolic process"/>
    <property type="evidence" value="ECO:0007669"/>
    <property type="project" value="UniProtKB-UniRule"/>
</dbReference>
<dbReference type="GO" id="GO:0006071">
    <property type="term" value="P:glycerol metabolic process"/>
    <property type="evidence" value="ECO:0000250"/>
    <property type="project" value="UniProtKB"/>
</dbReference>
<dbReference type="GO" id="GO:0006072">
    <property type="term" value="P:glycerol-3-phosphate metabolic process"/>
    <property type="evidence" value="ECO:0007669"/>
    <property type="project" value="InterPro"/>
</dbReference>
<dbReference type="CDD" id="cd07786">
    <property type="entry name" value="FGGY_EcGK_like"/>
    <property type="match status" value="1"/>
</dbReference>
<dbReference type="FunFam" id="3.30.420.40:FF:000007">
    <property type="entry name" value="Glycerol kinase"/>
    <property type="match status" value="1"/>
</dbReference>
<dbReference type="FunFam" id="3.30.420.40:FF:000008">
    <property type="entry name" value="Glycerol kinase"/>
    <property type="match status" value="1"/>
</dbReference>
<dbReference type="Gene3D" id="3.30.420.40">
    <property type="match status" value="2"/>
</dbReference>
<dbReference type="HAMAP" id="MF_00186">
    <property type="entry name" value="Glycerol_kin"/>
    <property type="match status" value="1"/>
</dbReference>
<dbReference type="InterPro" id="IPR043129">
    <property type="entry name" value="ATPase_NBD"/>
</dbReference>
<dbReference type="InterPro" id="IPR000577">
    <property type="entry name" value="Carb_kinase_FGGY"/>
</dbReference>
<dbReference type="InterPro" id="IPR018483">
    <property type="entry name" value="Carb_kinase_FGGY_CS"/>
</dbReference>
<dbReference type="InterPro" id="IPR018485">
    <property type="entry name" value="FGGY_C"/>
</dbReference>
<dbReference type="InterPro" id="IPR018484">
    <property type="entry name" value="FGGY_N"/>
</dbReference>
<dbReference type="InterPro" id="IPR005999">
    <property type="entry name" value="Glycerol_kin"/>
</dbReference>
<dbReference type="NCBIfam" id="TIGR01311">
    <property type="entry name" value="glycerol_kin"/>
    <property type="match status" value="1"/>
</dbReference>
<dbReference type="NCBIfam" id="NF000756">
    <property type="entry name" value="PRK00047.1"/>
    <property type="match status" value="1"/>
</dbReference>
<dbReference type="PANTHER" id="PTHR10196:SF69">
    <property type="entry name" value="GLYCEROL KINASE"/>
    <property type="match status" value="1"/>
</dbReference>
<dbReference type="PANTHER" id="PTHR10196">
    <property type="entry name" value="SUGAR KINASE"/>
    <property type="match status" value="1"/>
</dbReference>
<dbReference type="Pfam" id="PF02782">
    <property type="entry name" value="FGGY_C"/>
    <property type="match status" value="1"/>
</dbReference>
<dbReference type="Pfam" id="PF00370">
    <property type="entry name" value="FGGY_N"/>
    <property type="match status" value="1"/>
</dbReference>
<dbReference type="PIRSF" id="PIRSF000538">
    <property type="entry name" value="GlpK"/>
    <property type="match status" value="1"/>
</dbReference>
<dbReference type="SUPFAM" id="SSF53067">
    <property type="entry name" value="Actin-like ATPase domain"/>
    <property type="match status" value="2"/>
</dbReference>
<dbReference type="PROSITE" id="PS00933">
    <property type="entry name" value="FGGY_KINASES_1"/>
    <property type="match status" value="1"/>
</dbReference>
<dbReference type="PROSITE" id="PS00445">
    <property type="entry name" value="FGGY_KINASES_2"/>
    <property type="match status" value="1"/>
</dbReference>
<keyword id="KW-0067">ATP-binding</keyword>
<keyword id="KW-0319">Glycerol metabolism</keyword>
<keyword id="KW-0418">Kinase</keyword>
<keyword id="KW-0547">Nucleotide-binding</keyword>
<keyword id="KW-1185">Reference proteome</keyword>
<keyword id="KW-0808">Transferase</keyword>
<gene>
    <name evidence="1" type="primary">glpK</name>
    <name type="ordered locus">Hhal_0078</name>
</gene>
<reference key="1">
    <citation type="submission" date="2006-12" db="EMBL/GenBank/DDBJ databases">
        <title>Complete sequence of Halorhodospira halophila SL1.</title>
        <authorList>
            <consortium name="US DOE Joint Genome Institute"/>
            <person name="Copeland A."/>
            <person name="Lucas S."/>
            <person name="Lapidus A."/>
            <person name="Barry K."/>
            <person name="Detter J.C."/>
            <person name="Glavina del Rio T."/>
            <person name="Hammon N."/>
            <person name="Israni S."/>
            <person name="Dalin E."/>
            <person name="Tice H."/>
            <person name="Pitluck S."/>
            <person name="Saunders E."/>
            <person name="Brettin T."/>
            <person name="Bruce D."/>
            <person name="Han C."/>
            <person name="Tapia R."/>
            <person name="Schmutz J."/>
            <person name="Larimer F."/>
            <person name="Land M."/>
            <person name="Hauser L."/>
            <person name="Kyrpides N."/>
            <person name="Mikhailova N."/>
            <person name="Hoff W."/>
            <person name="Richardson P."/>
        </authorList>
    </citation>
    <scope>NUCLEOTIDE SEQUENCE [LARGE SCALE GENOMIC DNA]</scope>
    <source>
        <strain>DSM 244 / SL1</strain>
    </source>
</reference>
<comment type="function">
    <text evidence="1">Key enzyme in the regulation of glycerol uptake and metabolism. Catalyzes the phosphorylation of glycerol to yield sn-glycerol 3-phosphate.</text>
</comment>
<comment type="catalytic activity">
    <reaction evidence="1">
        <text>glycerol + ATP = sn-glycerol 3-phosphate + ADP + H(+)</text>
        <dbReference type="Rhea" id="RHEA:21644"/>
        <dbReference type="ChEBI" id="CHEBI:15378"/>
        <dbReference type="ChEBI" id="CHEBI:17754"/>
        <dbReference type="ChEBI" id="CHEBI:30616"/>
        <dbReference type="ChEBI" id="CHEBI:57597"/>
        <dbReference type="ChEBI" id="CHEBI:456216"/>
        <dbReference type="EC" id="2.7.1.30"/>
    </reaction>
</comment>
<comment type="activity regulation">
    <text evidence="1">Inhibited by fructose 1,6-bisphosphate (FBP).</text>
</comment>
<comment type="pathway">
    <text evidence="1">Polyol metabolism; glycerol degradation via glycerol kinase pathway; sn-glycerol 3-phosphate from glycerol: step 1/1.</text>
</comment>
<comment type="similarity">
    <text evidence="1">Belongs to the FGGY kinase family.</text>
</comment>
<proteinExistence type="inferred from homology"/>
<organism>
    <name type="scientific">Halorhodospira halophila (strain DSM 244 / SL1)</name>
    <name type="common">Ectothiorhodospira halophila (strain DSM 244 / SL1)</name>
    <dbReference type="NCBI Taxonomy" id="349124"/>
    <lineage>
        <taxon>Bacteria</taxon>
        <taxon>Pseudomonadati</taxon>
        <taxon>Pseudomonadota</taxon>
        <taxon>Gammaproteobacteria</taxon>
        <taxon>Chromatiales</taxon>
        <taxon>Ectothiorhodospiraceae</taxon>
        <taxon>Halorhodospira</taxon>
    </lineage>
</organism>
<feature type="chain" id="PRO_1000020736" description="Glycerol kinase">
    <location>
        <begin position="1"/>
        <end position="507"/>
    </location>
</feature>
<feature type="binding site" evidence="1">
    <location>
        <position position="13"/>
    </location>
    <ligand>
        <name>ADP</name>
        <dbReference type="ChEBI" id="CHEBI:456216"/>
    </ligand>
</feature>
<feature type="binding site" evidence="1">
    <location>
        <position position="13"/>
    </location>
    <ligand>
        <name>ATP</name>
        <dbReference type="ChEBI" id="CHEBI:30616"/>
    </ligand>
</feature>
<feature type="binding site" evidence="1">
    <location>
        <position position="13"/>
    </location>
    <ligand>
        <name>sn-glycerol 3-phosphate</name>
        <dbReference type="ChEBI" id="CHEBI:57597"/>
    </ligand>
</feature>
<feature type="binding site" evidence="1">
    <location>
        <position position="14"/>
    </location>
    <ligand>
        <name>ATP</name>
        <dbReference type="ChEBI" id="CHEBI:30616"/>
    </ligand>
</feature>
<feature type="binding site" evidence="1">
    <location>
        <position position="15"/>
    </location>
    <ligand>
        <name>ATP</name>
        <dbReference type="ChEBI" id="CHEBI:30616"/>
    </ligand>
</feature>
<feature type="binding site" evidence="1">
    <location>
        <position position="17"/>
    </location>
    <ligand>
        <name>ADP</name>
        <dbReference type="ChEBI" id="CHEBI:456216"/>
    </ligand>
</feature>
<feature type="binding site" evidence="1">
    <location>
        <position position="83"/>
    </location>
    <ligand>
        <name>glycerol</name>
        <dbReference type="ChEBI" id="CHEBI:17754"/>
    </ligand>
</feature>
<feature type="binding site" evidence="1">
    <location>
        <position position="83"/>
    </location>
    <ligand>
        <name>sn-glycerol 3-phosphate</name>
        <dbReference type="ChEBI" id="CHEBI:57597"/>
    </ligand>
</feature>
<feature type="binding site" evidence="1">
    <location>
        <position position="84"/>
    </location>
    <ligand>
        <name>glycerol</name>
        <dbReference type="ChEBI" id="CHEBI:17754"/>
    </ligand>
</feature>
<feature type="binding site" evidence="1">
    <location>
        <position position="84"/>
    </location>
    <ligand>
        <name>sn-glycerol 3-phosphate</name>
        <dbReference type="ChEBI" id="CHEBI:57597"/>
    </ligand>
</feature>
<feature type="binding site" evidence="1">
    <location>
        <position position="135"/>
    </location>
    <ligand>
        <name>glycerol</name>
        <dbReference type="ChEBI" id="CHEBI:17754"/>
    </ligand>
</feature>
<feature type="binding site" evidence="1">
    <location>
        <position position="135"/>
    </location>
    <ligand>
        <name>sn-glycerol 3-phosphate</name>
        <dbReference type="ChEBI" id="CHEBI:57597"/>
    </ligand>
</feature>
<feature type="binding site" evidence="1">
    <location>
        <position position="245"/>
    </location>
    <ligand>
        <name>glycerol</name>
        <dbReference type="ChEBI" id="CHEBI:17754"/>
    </ligand>
</feature>
<feature type="binding site" evidence="1">
    <location>
        <position position="245"/>
    </location>
    <ligand>
        <name>sn-glycerol 3-phosphate</name>
        <dbReference type="ChEBI" id="CHEBI:57597"/>
    </ligand>
</feature>
<feature type="binding site" evidence="1">
    <location>
        <position position="246"/>
    </location>
    <ligand>
        <name>glycerol</name>
        <dbReference type="ChEBI" id="CHEBI:17754"/>
    </ligand>
</feature>
<feature type="binding site" evidence="1">
    <location>
        <position position="267"/>
    </location>
    <ligand>
        <name>ADP</name>
        <dbReference type="ChEBI" id="CHEBI:456216"/>
    </ligand>
</feature>
<feature type="binding site" evidence="1">
    <location>
        <position position="267"/>
    </location>
    <ligand>
        <name>ATP</name>
        <dbReference type="ChEBI" id="CHEBI:30616"/>
    </ligand>
</feature>
<feature type="binding site" evidence="1">
    <location>
        <position position="310"/>
    </location>
    <ligand>
        <name>ADP</name>
        <dbReference type="ChEBI" id="CHEBI:456216"/>
    </ligand>
</feature>
<feature type="binding site" evidence="1">
    <location>
        <position position="310"/>
    </location>
    <ligand>
        <name>ATP</name>
        <dbReference type="ChEBI" id="CHEBI:30616"/>
    </ligand>
</feature>
<feature type="binding site" evidence="1">
    <location>
        <position position="314"/>
    </location>
    <ligand>
        <name>ATP</name>
        <dbReference type="ChEBI" id="CHEBI:30616"/>
    </ligand>
</feature>
<feature type="binding site" evidence="1">
    <location>
        <position position="411"/>
    </location>
    <ligand>
        <name>ADP</name>
        <dbReference type="ChEBI" id="CHEBI:456216"/>
    </ligand>
</feature>
<feature type="binding site" evidence="1">
    <location>
        <position position="411"/>
    </location>
    <ligand>
        <name>ATP</name>
        <dbReference type="ChEBI" id="CHEBI:30616"/>
    </ligand>
</feature>
<feature type="binding site" evidence="1">
    <location>
        <position position="415"/>
    </location>
    <ligand>
        <name>ADP</name>
        <dbReference type="ChEBI" id="CHEBI:456216"/>
    </ligand>
</feature>
<sequence>MQQRYILALDQGTTSCRAILFDHQAQIVGVAQKELTQYYPQPGWVEHDAMEIWGAQMGVVREVLEVHGVKPAELHAIGITNQRETTVLWDRHTGRPVHNAIVWQDRRTAPLCESLKERGLEQQVRETTGLVIDAYFSATKIRWLLDNVPGVRERAEQGELLFGTMDTWLVWNLTRGACHVTDYSNASRTMLYDIHRLAWDEGLLEALDIPRSLLPEVRPSCGSFGTTHPEMLGGAQIPIAGIAGDQQAALFGQACFEPGMAKNTYGTGCFLLMHSGERPAVSESGLLTTIAWGIDGRVEYALEGAIFIAGAAIQWLRDELKLIDSAEDSEYFAGKVPDAGGVYVVPAFAGLGAPYWDMYARGAIFGLTRGTRKEHITRATLDALAYQTKDVIDAMGRDAGVPLKALRVDGGAAANNVLMQFQADLLGVRVERPPVIETTALGAAYLAGIAVGIWDQAAVAHQTAPERVFEPSMEDDERDRLYRGWQKAVRRSMDWERESDGGVQQSE</sequence>
<accession>A1WT61</accession>